<keyword id="KW-0025">Alternative splicing</keyword>
<keyword id="KW-0968">Cytoplasmic vesicle</keyword>
<keyword id="KW-1015">Disulfide bond</keyword>
<keyword id="KW-0325">Glycoprotein</keyword>
<keyword id="KW-0333">Golgi apparatus</keyword>
<keyword id="KW-0378">Hydrolase</keyword>
<keyword id="KW-0472">Membrane</keyword>
<keyword id="KW-0479">Metal-binding</keyword>
<keyword id="KW-0482">Metalloprotease</keyword>
<keyword id="KW-0597">Phosphoprotein</keyword>
<keyword id="KW-0645">Protease</keyword>
<keyword id="KW-1185">Reference proteome</keyword>
<keyword id="KW-0735">Signal-anchor</keyword>
<keyword id="KW-0812">Transmembrane</keyword>
<keyword id="KW-1133">Transmembrane helix</keyword>
<keyword id="KW-0862">Zinc</keyword>
<reference key="1">
    <citation type="journal article" date="2009" name="PLoS Biol.">
        <title>Lineage-specific biology revealed by a finished genome assembly of the mouse.</title>
        <authorList>
            <person name="Church D.M."/>
            <person name="Goodstadt L."/>
            <person name="Hillier L.W."/>
            <person name="Zody M.C."/>
            <person name="Goldstein S."/>
            <person name="She X."/>
            <person name="Bult C.J."/>
            <person name="Agarwala R."/>
            <person name="Cherry J.L."/>
            <person name="DiCuccio M."/>
            <person name="Hlavina W."/>
            <person name="Kapustin Y."/>
            <person name="Meric P."/>
            <person name="Maglott D."/>
            <person name="Birtle Z."/>
            <person name="Marques A.C."/>
            <person name="Graves T."/>
            <person name="Zhou S."/>
            <person name="Teague B."/>
            <person name="Potamousis K."/>
            <person name="Churas C."/>
            <person name="Place M."/>
            <person name="Herschleb J."/>
            <person name="Runnheim R."/>
            <person name="Forrest D."/>
            <person name="Amos-Landgraf J."/>
            <person name="Schwartz D.C."/>
            <person name="Cheng Z."/>
            <person name="Lindblad-Toh K."/>
            <person name="Eichler E.E."/>
            <person name="Ponting C.P."/>
        </authorList>
    </citation>
    <scope>NUCLEOTIDE SEQUENCE [LARGE SCALE GENOMIC DNA]</scope>
    <source>
        <strain>C57BL/6J</strain>
    </source>
</reference>
<reference key="2">
    <citation type="journal article" date="2004" name="Genome Res.">
        <title>The status, quality, and expansion of the NIH full-length cDNA project: the Mammalian Gene Collection (MGC).</title>
        <authorList>
            <consortium name="The MGC Project Team"/>
        </authorList>
    </citation>
    <scope>NUCLEOTIDE SEQUENCE [LARGE SCALE MRNA] (ISOFORM ECE2-2)</scope>
    <source>
        <tissue>Brain</tissue>
    </source>
</reference>
<reference key="3">
    <citation type="journal article" date="2000" name="J. Clin. Invest.">
        <title>Disruption of ECE-1 and ECE-2 reveals a role for endothelin-converting enzyme-2 in murine cardiac development.</title>
        <authorList>
            <person name="Yanagisawa H."/>
            <person name="Hammer R.E."/>
            <person name="Richardson J.A."/>
            <person name="Emoto N."/>
            <person name="Williams S.C."/>
            <person name="Takeda S."/>
            <person name="Clouthier D.E."/>
            <person name="Yanagisawa M."/>
        </authorList>
    </citation>
    <scope>DISRUPTION PHENOTYPE</scope>
</reference>
<reference key="4">
    <citation type="journal article" date="2003" name="J. Biol. Chem.">
        <title>Alzheimer's disease beta-amyloid peptide is increased in mice deficient in endothelin-converting enzyme.</title>
        <authorList>
            <person name="Eckman E.A."/>
            <person name="Watson M."/>
            <person name="Marlow L."/>
            <person name="Sambamurti K."/>
            <person name="Eckman C.B."/>
        </authorList>
    </citation>
    <scope>FUNCTION</scope>
</reference>
<reference key="5">
    <citation type="journal article" date="2010" name="Cell">
        <title>A tissue-specific atlas of mouse protein phosphorylation and expression.</title>
        <authorList>
            <person name="Huttlin E.L."/>
            <person name="Jedrychowski M.P."/>
            <person name="Elias J.E."/>
            <person name="Goswami T."/>
            <person name="Rad R."/>
            <person name="Beausoleil S.A."/>
            <person name="Villen J."/>
            <person name="Haas W."/>
            <person name="Sowa M.E."/>
            <person name="Gygi S.P."/>
        </authorList>
    </citation>
    <scope>PHOSPHORYLATION [LARGE SCALE ANALYSIS] AT SER-27</scope>
    <scope>IDENTIFICATION BY MASS SPECTROMETRY [LARGE SCALE ANALYSIS]</scope>
    <source>
        <tissue>Brain</tissue>
    </source>
</reference>
<dbReference type="EC" id="3.4.24.71" evidence="3"/>
<dbReference type="EMBL" id="AC087898">
    <property type="status" value="NOT_ANNOTATED_CDS"/>
    <property type="molecule type" value="Genomic_DNA"/>
</dbReference>
<dbReference type="EMBL" id="BC138052">
    <property type="protein sequence ID" value="AAI38053.1"/>
    <property type="molecule type" value="mRNA"/>
</dbReference>
<dbReference type="EMBL" id="BC138053">
    <property type="protein sequence ID" value="AAI38054.1"/>
    <property type="molecule type" value="mRNA"/>
</dbReference>
<dbReference type="CCDS" id="CCDS28052.1">
    <molecule id="B2RQR8-1"/>
</dbReference>
<dbReference type="CCDS" id="CCDS49796.1">
    <molecule id="B2RQR8-2"/>
</dbReference>
<dbReference type="RefSeq" id="NP_647454.2">
    <molecule id="B2RQR8-1"/>
    <property type="nucleotide sequence ID" value="NM_139293.2"/>
</dbReference>
<dbReference type="RefSeq" id="NP_808811.1">
    <molecule id="B2RQR8-2"/>
    <property type="nucleotide sequence ID" value="NM_177942.1"/>
</dbReference>
<dbReference type="SMR" id="B2RQR8"/>
<dbReference type="STRING" id="10090.ENSMUSP00000003898"/>
<dbReference type="MEROPS" id="M13.003"/>
<dbReference type="GlyCosmos" id="B2RQR8">
    <property type="glycosylation" value="9 sites, No reported glycans"/>
</dbReference>
<dbReference type="iPTMnet" id="B2RQR8"/>
<dbReference type="PhosphoSitePlus" id="B2RQR8"/>
<dbReference type="ProteomicsDB" id="275427">
    <molecule id="B2RQR8-1"/>
</dbReference>
<dbReference type="ProteomicsDB" id="275428">
    <molecule id="B2RQR8-2"/>
</dbReference>
<dbReference type="DNASU" id="107522"/>
<dbReference type="Ensembl" id="ENSMUST00000003898.12">
    <molecule id="B2RQR8-1"/>
    <property type="protein sequence ID" value="ENSMUSP00000003898.6"/>
    <property type="gene ID" value="ENSMUSG00000022842.19"/>
</dbReference>
<dbReference type="Ensembl" id="ENSMUST00000133344.8">
    <molecule id="B2RQR8-2"/>
    <property type="protein sequence ID" value="ENSMUSP00000119693.2"/>
    <property type="gene ID" value="ENSMUSG00000022842.19"/>
</dbReference>
<dbReference type="GeneID" id="107522"/>
<dbReference type="KEGG" id="mmu:107522"/>
<dbReference type="UCSC" id="uc007yqm.1">
    <molecule id="B2RQR8-1"/>
    <property type="organism name" value="mouse"/>
</dbReference>
<dbReference type="CTD" id="9718"/>
<dbReference type="MGI" id="MGI:1101356">
    <property type="gene designation" value="Ece2"/>
</dbReference>
<dbReference type="VEuPathDB" id="HostDB:ENSMUSG00000022842"/>
<dbReference type="GeneTree" id="ENSGT00940000156921"/>
<dbReference type="OMA" id="RYCELEY"/>
<dbReference type="OrthoDB" id="6475849at2759"/>
<dbReference type="BioGRID-ORCS" id="107522">
    <property type="hits" value="5 hits in 75 CRISPR screens"/>
</dbReference>
<dbReference type="ChiTaRS" id="Ece2">
    <property type="organism name" value="mouse"/>
</dbReference>
<dbReference type="PRO" id="PR:B2RQR8"/>
<dbReference type="Proteomes" id="UP000000589">
    <property type="component" value="Chromosome 16"/>
</dbReference>
<dbReference type="Bgee" id="ENSMUSG00000022842">
    <property type="expression patterns" value="Expressed in hypothalamus and 60 other cell types or tissues"/>
</dbReference>
<dbReference type="ExpressionAtlas" id="B2RQR8">
    <property type="expression patterns" value="baseline and differential"/>
</dbReference>
<dbReference type="GO" id="GO:0000139">
    <property type="term" value="C:Golgi membrane"/>
    <property type="evidence" value="ECO:0000250"/>
    <property type="project" value="UniProtKB"/>
</dbReference>
<dbReference type="GO" id="GO:0005802">
    <property type="term" value="C:trans-Golgi network"/>
    <property type="evidence" value="ECO:0000250"/>
    <property type="project" value="MGI"/>
</dbReference>
<dbReference type="GO" id="GO:0030658">
    <property type="term" value="C:transport vesicle membrane"/>
    <property type="evidence" value="ECO:0000250"/>
    <property type="project" value="UniProtKB"/>
</dbReference>
<dbReference type="GO" id="GO:0046872">
    <property type="term" value="F:metal ion binding"/>
    <property type="evidence" value="ECO:0007669"/>
    <property type="project" value="UniProtKB-KW"/>
</dbReference>
<dbReference type="GO" id="GO:0004222">
    <property type="term" value="F:metalloendopeptidase activity"/>
    <property type="evidence" value="ECO:0007669"/>
    <property type="project" value="UniProtKB-EC"/>
</dbReference>
<dbReference type="GO" id="GO:0016486">
    <property type="term" value="P:peptide hormone processing"/>
    <property type="evidence" value="ECO:0000250"/>
    <property type="project" value="MGI"/>
</dbReference>
<dbReference type="CDD" id="cd08662">
    <property type="entry name" value="M13"/>
    <property type="match status" value="1"/>
</dbReference>
<dbReference type="FunFam" id="1.10.1380.10:FF:000001">
    <property type="entry name" value="endothelin-converting enzyme 2 isoform X1"/>
    <property type="match status" value="1"/>
</dbReference>
<dbReference type="Gene3D" id="3.40.390.10">
    <property type="entry name" value="Collagenase (Catalytic Domain)"/>
    <property type="match status" value="1"/>
</dbReference>
<dbReference type="Gene3D" id="1.10.1380.10">
    <property type="entry name" value="Neutral endopeptidase , domain2"/>
    <property type="match status" value="1"/>
</dbReference>
<dbReference type="InterPro" id="IPR024079">
    <property type="entry name" value="MetalloPept_cat_dom_sf"/>
</dbReference>
<dbReference type="InterPro" id="IPR000718">
    <property type="entry name" value="Peptidase_M13"/>
</dbReference>
<dbReference type="InterPro" id="IPR018497">
    <property type="entry name" value="Peptidase_M13_C"/>
</dbReference>
<dbReference type="InterPro" id="IPR042089">
    <property type="entry name" value="Peptidase_M13_dom_2"/>
</dbReference>
<dbReference type="InterPro" id="IPR008753">
    <property type="entry name" value="Peptidase_M13_N"/>
</dbReference>
<dbReference type="PANTHER" id="PTHR11733:SF127">
    <property type="entry name" value="EEF1AKMT4-ECE2 READTHROUGH TRANSCRIPT PROTEIN-RELATED"/>
    <property type="match status" value="1"/>
</dbReference>
<dbReference type="PANTHER" id="PTHR11733">
    <property type="entry name" value="ZINC METALLOPROTEASE FAMILY M13 NEPRILYSIN-RELATED"/>
    <property type="match status" value="1"/>
</dbReference>
<dbReference type="Pfam" id="PF01431">
    <property type="entry name" value="Peptidase_M13"/>
    <property type="match status" value="1"/>
</dbReference>
<dbReference type="Pfam" id="PF05649">
    <property type="entry name" value="Peptidase_M13_N"/>
    <property type="match status" value="1"/>
</dbReference>
<dbReference type="PRINTS" id="PR00786">
    <property type="entry name" value="NEPRILYSIN"/>
</dbReference>
<dbReference type="SUPFAM" id="SSF55486">
    <property type="entry name" value="Metalloproteases ('zincins'), catalytic domain"/>
    <property type="match status" value="1"/>
</dbReference>
<dbReference type="PROSITE" id="PS51885">
    <property type="entry name" value="NEPRILYSIN"/>
    <property type="match status" value="1"/>
</dbReference>
<dbReference type="PROSITE" id="PS00142">
    <property type="entry name" value="ZINC_PROTEASE"/>
    <property type="match status" value="1"/>
</dbReference>
<accession>B2RQR8</accession>
<accession>E9Q896</accession>
<comment type="function">
    <text evidence="3 8">Converts big endothelin-1 to endothelin-1. Also involved in the processing of various neuroendocrine peptides, including neurotensin, angiotensin I, substance P, proenkephalin-derived peptides, and prodynorphin-derived peptides (By similarity). May play a role in amyloid-beta processing (PubMed:12464614).</text>
</comment>
<comment type="catalytic activity">
    <reaction evidence="3">
        <text>Hydrolysis of the 21-Trp-|-Val-22 bond in big endothelin to form endothelin 1.</text>
        <dbReference type="EC" id="3.4.24.71"/>
    </reaction>
</comment>
<comment type="cofactor">
    <cofactor evidence="1">
        <name>Zn(2+)</name>
        <dbReference type="ChEBI" id="CHEBI:29105"/>
    </cofactor>
    <text evidence="1">Binds 1 zinc ion per subunit.</text>
</comment>
<comment type="subcellular location">
    <subcellularLocation>
        <location evidence="2">Golgi apparatus membrane</location>
        <topology evidence="9">Single-pass type II membrane protein</topology>
    </subcellularLocation>
    <subcellularLocation>
        <location evidence="2">Cytoplasmic vesicle</location>
        <location evidence="2">Secretory vesicle membrane</location>
    </subcellularLocation>
</comment>
<comment type="alternative products">
    <event type="alternative splicing"/>
    <isoform>
        <id>B2RQR8-1</id>
        <name>Ece2-1</name>
        <sequence type="displayed"/>
    </isoform>
    <isoform>
        <id>B2RQR8-2</id>
        <name>Ece2-2</name>
        <sequence type="described" ref="VSP_059326"/>
    </isoform>
    <isoform>
        <id>P0DPD9-1</id>
        <id>Q80Z60-1</id>
        <name>Eef1akmt4-Ece2-1</name>
        <name>ECE-2a-1</name>
        <sequence type="external"/>
    </isoform>
    <isoform>
        <id>P0DPD9-2</id>
        <id>Q80Z60-2</id>
        <name>Eef1akmt4-Ece2-2</name>
        <name>ECE-2a-2</name>
        <sequence type="external"/>
    </isoform>
</comment>
<comment type="disruption phenotype">
    <text evidence="7">Eef1akmt4-Ece2 and Ece2 double mutant mice are fertile and healthy, and do not display any abnormality in terms of growth or aging.</text>
</comment>
<comment type="similarity">
    <text evidence="5 9">Belongs to the peptidase M13 family.</text>
</comment>
<evidence type="ECO:0000250" key="1"/>
<evidence type="ECO:0000250" key="2">
    <source>
        <dbReference type="UniProtKB" id="F1N476"/>
    </source>
</evidence>
<evidence type="ECO:0000250" key="3">
    <source>
        <dbReference type="UniProtKB" id="P0DPD6"/>
    </source>
</evidence>
<evidence type="ECO:0000255" key="4"/>
<evidence type="ECO:0000255" key="5">
    <source>
        <dbReference type="PROSITE-ProRule" id="PRU01233"/>
    </source>
</evidence>
<evidence type="ECO:0000255" key="6">
    <source>
        <dbReference type="PROSITE-ProRule" id="PRU10095"/>
    </source>
</evidence>
<evidence type="ECO:0000269" key="7">
    <source>
    </source>
</evidence>
<evidence type="ECO:0000269" key="8">
    <source>
    </source>
</evidence>
<evidence type="ECO:0000305" key="9"/>
<evidence type="ECO:0000312" key="10">
    <source>
        <dbReference type="MGI" id="MGI:1101356"/>
    </source>
</evidence>
<evidence type="ECO:0007744" key="11">
    <source>
    </source>
</evidence>
<gene>
    <name evidence="10" type="primary">Ece2</name>
</gene>
<sequence>MNVALHELGGGGSMVEYKRAKLRDEESPEITVEGRATRDSLEVGFQKRTRQLFGSHTQLELVLAGLILVLAALLLGCLVALWVHRDPAHSTCVTEACIRVAGKILESLDRGVSPCQDFYQFSCGGWIRRNPLPNGRSRWNTFNSLWDQNQAILKHLLENTTFNSSSEAERKTRSFYLSCLQSERIEKLGAKPLRDLIDKIGGWNITGPWDEDSFMDVLKAVAGTYRATPFFTVYVSADSKSSNSNIIQVDQSGLFLPSRDYYLNRTANEKVLTAYLDYMVELGVLLGGQPTSTREQMQQVLELEIQLANITVPQDQRRDEEKIYHKMSISELQALAPAVDWLEFLSFLLSPLELGDSEPVVVYGTEYLQQVSELINRTEPSILNNYLIWNLVQKTTSSLDQRFETAQEKLLETLYGTKKSCTPRWQTCISNTDDALGFALGSLFVKATFDRQSKEIAEGMINEIRSAFEETLGDLVWMDEKTRLAAKEKADAIYDMIGFPDFILEPKELDDVYDGYEVSEDSFFQNMLNLYNFSAKVMADQLRKPPSRDQWSMTPQTVNAYYLPTKNEIVFPAGILQAPFYAHNHPKALNFGGIGVVMGHELTHAFDDQGREYDKEGNLRPWWQNESLTAFQNHTACMEEQYSQYQVNGERLNGLQTLGENIADNGGLKAAYNAYKAWLRKHGEEQPLPAVGLTNHQLFFVGFAQVWCSVRTPESSHEGLVTDPHSPARFRVLGTLSNSRDFLRHFGCPVGSPMNPGQLCEVW</sequence>
<protein>
    <recommendedName>
        <fullName evidence="9">Endothelin-converting enzyme 2</fullName>
        <shortName>ECE-2</shortName>
        <ecNumber evidence="3">3.4.24.71</ecNumber>
    </recommendedName>
</protein>
<proteinExistence type="evidence at protein level"/>
<name>ECE2_MOUSE</name>
<feature type="chain" id="PRO_0000443294" description="Endothelin-converting enzyme 2">
    <location>
        <begin position="1"/>
        <end position="763"/>
    </location>
</feature>
<feature type="topological domain" description="Cytoplasmic" evidence="9">
    <location>
        <begin position="1"/>
        <end position="60"/>
    </location>
</feature>
<feature type="transmembrane region" description="Helical; Signal-anchor for type II membrane protein" evidence="9">
    <location>
        <begin position="61"/>
        <end position="81"/>
    </location>
</feature>
<feature type="topological domain" description="Lumenal" evidence="9">
    <location>
        <begin position="82"/>
        <end position="763"/>
    </location>
</feature>
<feature type="domain" description="Peptidase M13" evidence="5">
    <location>
        <begin position="91"/>
        <end position="763"/>
    </location>
</feature>
<feature type="active site" evidence="5 6">
    <location>
        <position position="601"/>
    </location>
</feature>
<feature type="active site" description="Proton donor" evidence="5">
    <location>
        <position position="664"/>
    </location>
</feature>
<feature type="binding site" evidence="5 6">
    <location>
        <position position="600"/>
    </location>
    <ligand>
        <name>Zn(2+)</name>
        <dbReference type="ChEBI" id="CHEBI:29105"/>
        <note>catalytic</note>
    </ligand>
</feature>
<feature type="binding site" evidence="5 6">
    <location>
        <position position="604"/>
    </location>
    <ligand>
        <name>Zn(2+)</name>
        <dbReference type="ChEBI" id="CHEBI:29105"/>
        <note>catalytic</note>
    </ligand>
</feature>
<feature type="binding site" evidence="5">
    <location>
        <position position="660"/>
    </location>
    <ligand>
        <name>Zn(2+)</name>
        <dbReference type="ChEBI" id="CHEBI:29105"/>
        <note>catalytic</note>
    </ligand>
</feature>
<feature type="modified residue" description="Phosphoserine" evidence="11">
    <location>
        <position position="27"/>
    </location>
</feature>
<feature type="glycosylation site" description="N-linked (GlcNAc...) asparagine" evidence="4">
    <location>
        <position position="159"/>
    </location>
</feature>
<feature type="glycosylation site" description="N-linked (GlcNAc...) asparagine" evidence="4">
    <location>
        <position position="163"/>
    </location>
</feature>
<feature type="glycosylation site" description="N-linked (GlcNAc...) asparagine" evidence="4">
    <location>
        <position position="204"/>
    </location>
</feature>
<feature type="glycosylation site" description="N-linked (GlcNAc...) asparagine" evidence="4">
    <location>
        <position position="264"/>
    </location>
</feature>
<feature type="glycosylation site" description="N-linked (GlcNAc...) asparagine" evidence="4">
    <location>
        <position position="309"/>
    </location>
</feature>
<feature type="glycosylation site" description="N-linked (GlcNAc...) asparagine" evidence="4">
    <location>
        <position position="376"/>
    </location>
</feature>
<feature type="glycosylation site" description="N-linked (GlcNAc...) asparagine" evidence="4">
    <location>
        <position position="532"/>
    </location>
</feature>
<feature type="glycosylation site" description="N-linked (GlcNAc...) asparagine" evidence="4">
    <location>
        <position position="625"/>
    </location>
</feature>
<feature type="glycosylation site" description="N-linked (GlcNAc...) asparagine" evidence="4">
    <location>
        <position position="633"/>
    </location>
</feature>
<feature type="disulfide bond" evidence="5">
    <location>
        <begin position="92"/>
        <end position="97"/>
    </location>
</feature>
<feature type="disulfide bond" evidence="5">
    <location>
        <begin position="115"/>
        <end position="748"/>
    </location>
</feature>
<feature type="disulfide bond" evidence="5">
    <location>
        <begin position="123"/>
        <end position="708"/>
    </location>
</feature>
<feature type="disulfide bond" evidence="5">
    <location>
        <begin position="179"/>
        <end position="428"/>
    </location>
</feature>
<feature type="disulfide bond" evidence="5">
    <location>
        <begin position="637"/>
        <end position="760"/>
    </location>
</feature>
<feature type="splice variant" id="VSP_059326" description="In isoform Ece2-2.">
    <location>
        <begin position="14"/>
        <end position="42"/>
    </location>
</feature>
<organism>
    <name type="scientific">Mus musculus</name>
    <name type="common">Mouse</name>
    <dbReference type="NCBI Taxonomy" id="10090"/>
    <lineage>
        <taxon>Eukaryota</taxon>
        <taxon>Metazoa</taxon>
        <taxon>Chordata</taxon>
        <taxon>Craniata</taxon>
        <taxon>Vertebrata</taxon>
        <taxon>Euteleostomi</taxon>
        <taxon>Mammalia</taxon>
        <taxon>Eutheria</taxon>
        <taxon>Euarchontoglires</taxon>
        <taxon>Glires</taxon>
        <taxon>Rodentia</taxon>
        <taxon>Myomorpha</taxon>
        <taxon>Muroidea</taxon>
        <taxon>Muridae</taxon>
        <taxon>Murinae</taxon>
        <taxon>Mus</taxon>
        <taxon>Mus</taxon>
    </lineage>
</organism>